<dbReference type="EMBL" id="AF198100">
    <property type="protein sequence ID" value="AAF44440.1"/>
    <property type="molecule type" value="Genomic_DNA"/>
</dbReference>
<dbReference type="RefSeq" id="NP_039059.1">
    <property type="nucleotide sequence ID" value="NC_002188.1"/>
</dbReference>
<dbReference type="GeneID" id="1486644"/>
<dbReference type="KEGG" id="vg:1486644"/>
<dbReference type="Proteomes" id="UP000008597">
    <property type="component" value="Segment"/>
</dbReference>
<dbReference type="GO" id="GO:0044423">
    <property type="term" value="C:virion component"/>
    <property type="evidence" value="ECO:0007669"/>
    <property type="project" value="UniProtKB-KW"/>
</dbReference>
<dbReference type="InterPro" id="IPR006749">
    <property type="entry name" value="Pox_E6"/>
</dbReference>
<dbReference type="Pfam" id="PF04656">
    <property type="entry name" value="Pox_E6"/>
    <property type="match status" value="1"/>
</dbReference>
<dbReference type="PIRSF" id="PIRSF015629">
    <property type="entry name" value="VAC_E6R"/>
    <property type="match status" value="1"/>
</dbReference>
<comment type="function">
    <text evidence="1">Late protein which may play a role in the virion morphogenesis and have therefore an indirect role on viral transcription ability.</text>
</comment>
<comment type="subcellular location">
    <subcellularLocation>
        <location evidence="1">Virion</location>
    </subcellularLocation>
    <text evidence="1">Localizes in the mature virion (MV).</text>
</comment>
<comment type="induction">
    <text>Expressed in the late phase of the viral replicative cycle.</text>
</comment>
<comment type="similarity">
    <text evidence="2">Belongs to the chordopoxvirinae E6 family.</text>
</comment>
<reference key="1">
    <citation type="journal article" date="2000" name="J. Virol.">
        <title>The genome of fowlpox virus.</title>
        <authorList>
            <person name="Afonso C.L."/>
            <person name="Tulman E.R."/>
            <person name="Lu Z."/>
            <person name="Zsak L."/>
            <person name="Kutish G.F."/>
            <person name="Rock D.L."/>
        </authorList>
    </citation>
    <scope>NUCLEOTIDE SEQUENCE [LARGE SCALE GENOMIC DNA]</scope>
</reference>
<protein>
    <recommendedName>
        <fullName>Protein E6 homolog</fullName>
    </recommendedName>
</protein>
<feature type="chain" id="PRO_0000099457" description="Protein E6 homolog">
    <location>
        <begin position="1"/>
        <end position="571"/>
    </location>
</feature>
<evidence type="ECO:0000250" key="1"/>
<evidence type="ECO:0000305" key="2"/>
<sequence length="571" mass="67789">MDFIRRKYLIYTVENNINFFTQELADKISNFCLNHVVAINYIIKKYHKSVLTKDIFNNTNFYIFLHFIRDCETYDIVLKSSFDVTLLYLNQLVKNYTSFTDFIDIYKQQSNTLLDDKRFLFVTKLSPYFQDIISVNFSTELNPLFHLNEPIKDLEIIYSKLFKETRFIKVDRISVLRLLIWAYSLKMDTGMKFDDNDSHDLYTILQKTGPVVSSIMTETFKEFVFPKNSTTSYWLFMKERIYNDEKVYTNEPAITIYEKVLSYIYSEIKQARVNKNMLKVVYMLDSDSEIKKFMLELIYGIPGDILSIIDERDETWKSYFVDFYHDNFIDDKTFTSANRFYDDLFNVIAKIDPEKFDIRRDIESIFRTDATLVKRFDDMKINSTYVSQMIYQTQNVDLLALENKKLCQIYNKDTEYAIKEYNTYLYLNEDNPIVIYKGELKKLSDLDLNSPSIVFSLFSKSLLKYYLDSKLASLGLIIENYKDDIILKIITGSSCLQNFTSFIVYATCNDKSILKSVVRTIINHFKVAIIILFKQFLQENIYYVNEYLDNTKHLSKNDKKFILQIINGNYD</sequence>
<gene>
    <name type="ordered locus">FPV096</name>
</gene>
<accession>Q9J5C4</accession>
<keyword id="KW-0426">Late protein</keyword>
<keyword id="KW-1185">Reference proteome</keyword>
<keyword id="KW-0946">Virion</keyword>
<name>E6_FOWPN</name>
<organismHost>
    <name type="scientific">Vertebrata</name>
    <dbReference type="NCBI Taxonomy" id="7742"/>
</organismHost>
<organism>
    <name type="scientific">Fowlpox virus (strain NVSL)</name>
    <name type="common">FPV</name>
    <dbReference type="NCBI Taxonomy" id="928301"/>
    <lineage>
        <taxon>Viruses</taxon>
        <taxon>Varidnaviria</taxon>
        <taxon>Bamfordvirae</taxon>
        <taxon>Nucleocytoviricota</taxon>
        <taxon>Pokkesviricetes</taxon>
        <taxon>Chitovirales</taxon>
        <taxon>Poxviridae</taxon>
        <taxon>Chordopoxvirinae</taxon>
        <taxon>Avipoxvirus</taxon>
        <taxon>Fowlpox virus</taxon>
    </lineage>
</organism>
<proteinExistence type="evidence at transcript level"/>